<organism>
    <name type="scientific">Salmonella schwarzengrund (strain CVM19633)</name>
    <dbReference type="NCBI Taxonomy" id="439843"/>
    <lineage>
        <taxon>Bacteria</taxon>
        <taxon>Pseudomonadati</taxon>
        <taxon>Pseudomonadota</taxon>
        <taxon>Gammaproteobacteria</taxon>
        <taxon>Enterobacterales</taxon>
        <taxon>Enterobacteriaceae</taxon>
        <taxon>Salmonella</taxon>
    </lineage>
</organism>
<keyword id="KW-0997">Cell inner membrane</keyword>
<keyword id="KW-1003">Cell membrane</keyword>
<keyword id="KW-0378">Hydrolase</keyword>
<keyword id="KW-0472">Membrane</keyword>
<keyword id="KW-0645">Protease</keyword>
<keyword id="KW-0720">Serine protease</keyword>
<keyword id="KW-0812">Transmembrane</keyword>
<keyword id="KW-1133">Transmembrane helix</keyword>
<gene>
    <name evidence="1" type="primary">glpG</name>
    <name type="ordered locus">SeSA_A3716</name>
</gene>
<feature type="chain" id="PRO_1000147867" description="Rhomboid protease GlpG">
    <location>
        <begin position="1"/>
        <end position="276"/>
    </location>
</feature>
<feature type="transmembrane region" description="Helical" evidence="1">
    <location>
        <begin position="94"/>
        <end position="114"/>
    </location>
</feature>
<feature type="transmembrane region" description="Helical" evidence="1">
    <location>
        <begin position="142"/>
        <end position="162"/>
    </location>
</feature>
<feature type="transmembrane region" description="Helical" evidence="1">
    <location>
        <begin position="169"/>
        <end position="189"/>
    </location>
</feature>
<feature type="transmembrane region" description="Helical" evidence="1">
    <location>
        <begin position="192"/>
        <end position="212"/>
    </location>
</feature>
<feature type="transmembrane region" description="Helical" evidence="1">
    <location>
        <begin position="229"/>
        <end position="249"/>
    </location>
</feature>
<feature type="transmembrane region" description="Helical" evidence="1">
    <location>
        <begin position="250"/>
        <end position="270"/>
    </location>
</feature>
<feature type="active site" description="Nucleophile" evidence="1">
    <location>
        <position position="201"/>
    </location>
</feature>
<feature type="active site" evidence="1">
    <location>
        <position position="254"/>
    </location>
</feature>
<accession>B4TY77</accession>
<protein>
    <recommendedName>
        <fullName evidence="1">Rhomboid protease GlpG</fullName>
        <ecNumber evidence="1">3.4.21.105</ecNumber>
    </recommendedName>
    <alternativeName>
        <fullName evidence="1">Intramembrane serine protease</fullName>
    </alternativeName>
</protein>
<sequence>MLMITSFANPRVAQAFVDYMATQGVILTIQQHNQSDIWLADESQAERVRVELARFIENPGDPRYLAASWQSGQTNSGLRYRRFPFLATLRERAGPVTWIVMLACVLVYIAMSLIGDQTVMVWLAWPFDPVLKFEVWRYFTHIFMHFSLMHILFNLLWWWYLGGAVEKRLGSGKLIVITVISALLSGYVQQKFSGPWFGGLSGVVYALMGYVWLRGERDPQSGIYLQRGLIIFALLWIVAGWFDWFGMSMANGAHIAGLIVGLAMAFVDTLNARKRT</sequence>
<name>GLPG_SALSV</name>
<dbReference type="EC" id="3.4.21.105" evidence="1"/>
<dbReference type="EMBL" id="CP001127">
    <property type="protein sequence ID" value="ACF93083.1"/>
    <property type="molecule type" value="Genomic_DNA"/>
</dbReference>
<dbReference type="RefSeq" id="WP_000928702.1">
    <property type="nucleotide sequence ID" value="NC_011094.1"/>
</dbReference>
<dbReference type="SMR" id="B4TY77"/>
<dbReference type="MEROPS" id="S54.016"/>
<dbReference type="KEGG" id="sew:SeSA_A3716"/>
<dbReference type="HOGENOM" id="CLU_058989_0_0_6"/>
<dbReference type="Proteomes" id="UP000001865">
    <property type="component" value="Chromosome"/>
</dbReference>
<dbReference type="GO" id="GO:0005886">
    <property type="term" value="C:plasma membrane"/>
    <property type="evidence" value="ECO:0007669"/>
    <property type="project" value="UniProtKB-SubCell"/>
</dbReference>
<dbReference type="GO" id="GO:0004252">
    <property type="term" value="F:serine-type endopeptidase activity"/>
    <property type="evidence" value="ECO:0007669"/>
    <property type="project" value="UniProtKB-UniRule"/>
</dbReference>
<dbReference type="GO" id="GO:0006508">
    <property type="term" value="P:proteolysis"/>
    <property type="evidence" value="ECO:0007669"/>
    <property type="project" value="UniProtKB-UniRule"/>
</dbReference>
<dbReference type="FunFam" id="1.20.1540.10:FF:000003">
    <property type="entry name" value="Rhomboid protease GlpG"/>
    <property type="match status" value="1"/>
</dbReference>
<dbReference type="FunFam" id="3.30.70.2350:FF:000001">
    <property type="entry name" value="Rhomboid protease GlpG"/>
    <property type="match status" value="1"/>
</dbReference>
<dbReference type="Gene3D" id="3.30.70.2350">
    <property type="match status" value="1"/>
</dbReference>
<dbReference type="Gene3D" id="1.20.1540.10">
    <property type="entry name" value="Rhomboid-like"/>
    <property type="match status" value="1"/>
</dbReference>
<dbReference type="HAMAP" id="MF_01594">
    <property type="entry name" value="Rhomboid_GlpG"/>
    <property type="match status" value="1"/>
</dbReference>
<dbReference type="InterPro" id="IPR038236">
    <property type="entry name" value="GlpG_N_sf"/>
</dbReference>
<dbReference type="InterPro" id="IPR022732">
    <property type="entry name" value="Peptidase_S54_GlpG_N"/>
</dbReference>
<dbReference type="InterPro" id="IPR022764">
    <property type="entry name" value="Peptidase_S54_rhomboid_dom"/>
</dbReference>
<dbReference type="InterPro" id="IPR035952">
    <property type="entry name" value="Rhomboid-like_sf"/>
</dbReference>
<dbReference type="InterPro" id="IPR023662">
    <property type="entry name" value="Rhomboid_protease_GlpG"/>
</dbReference>
<dbReference type="NCBIfam" id="NF008155">
    <property type="entry name" value="PRK10907.1"/>
    <property type="match status" value="1"/>
</dbReference>
<dbReference type="NCBIfam" id="TIGR04239">
    <property type="entry name" value="rhombo_GlpG"/>
    <property type="match status" value="1"/>
</dbReference>
<dbReference type="PANTHER" id="PTHR43066:SF26">
    <property type="entry name" value="RHOMBOID PROTEASE GLPG"/>
    <property type="match status" value="1"/>
</dbReference>
<dbReference type="PANTHER" id="PTHR43066">
    <property type="entry name" value="RHOMBOID-RELATED PROTEIN"/>
    <property type="match status" value="1"/>
</dbReference>
<dbReference type="Pfam" id="PF01694">
    <property type="entry name" value="Rhomboid"/>
    <property type="match status" value="1"/>
</dbReference>
<dbReference type="Pfam" id="PF12122">
    <property type="entry name" value="Rhomboid_N"/>
    <property type="match status" value="1"/>
</dbReference>
<dbReference type="SUPFAM" id="SSF144091">
    <property type="entry name" value="Rhomboid-like"/>
    <property type="match status" value="1"/>
</dbReference>
<evidence type="ECO:0000255" key="1">
    <source>
        <dbReference type="HAMAP-Rule" id="MF_01594"/>
    </source>
</evidence>
<comment type="function">
    <text evidence="1">Rhomboid-type serine protease that catalyzes intramembrane proteolysis.</text>
</comment>
<comment type="catalytic activity">
    <reaction evidence="1">
        <text>Cleaves type-1 transmembrane domains using a catalytic dyad composed of serine and histidine that are contributed by different transmembrane domains.</text>
        <dbReference type="EC" id="3.4.21.105"/>
    </reaction>
</comment>
<comment type="subcellular location">
    <subcellularLocation>
        <location evidence="1">Cell inner membrane</location>
        <topology evidence="1">Multi-pass membrane protein</topology>
    </subcellularLocation>
</comment>
<comment type="similarity">
    <text evidence="1">Belongs to the peptidase S54 family.</text>
</comment>
<reference key="1">
    <citation type="journal article" date="2011" name="J. Bacteriol.">
        <title>Comparative genomics of 28 Salmonella enterica isolates: evidence for CRISPR-mediated adaptive sublineage evolution.</title>
        <authorList>
            <person name="Fricke W.F."/>
            <person name="Mammel M.K."/>
            <person name="McDermott P.F."/>
            <person name="Tartera C."/>
            <person name="White D.G."/>
            <person name="Leclerc J.E."/>
            <person name="Ravel J."/>
            <person name="Cebula T.A."/>
        </authorList>
    </citation>
    <scope>NUCLEOTIDE SEQUENCE [LARGE SCALE GENOMIC DNA]</scope>
    <source>
        <strain>CVM19633</strain>
    </source>
</reference>
<proteinExistence type="inferred from homology"/>